<feature type="transit peptide" description="Mitochondrion" evidence="2">
    <location>
        <begin position="1"/>
        <end position="35"/>
    </location>
</feature>
<feature type="chain" id="PRO_0000408720" description="Altered inheritance of mitochondria protein 9, mitochondrial">
    <location>
        <begin position="36"/>
        <end position="620"/>
    </location>
</feature>
<protein>
    <recommendedName>
        <fullName>Altered inheritance of mitochondria protein 9, mitochondrial</fullName>
    </recommendedName>
    <alternativeName>
        <fullName>Found in mitochondrial proteome protein 29</fullName>
    </alternativeName>
</protein>
<evidence type="ECO:0000250" key="1"/>
<evidence type="ECO:0000255" key="2"/>
<evidence type="ECO:0000305" key="3"/>
<proteinExistence type="inferred from homology"/>
<dbReference type="EMBL" id="GG692400">
    <property type="protein sequence ID" value="EER31644.1"/>
    <property type="molecule type" value="Genomic_DNA"/>
</dbReference>
<dbReference type="RefSeq" id="XP_002550129.1">
    <property type="nucleotide sequence ID" value="XM_002550083.1"/>
</dbReference>
<dbReference type="STRING" id="294747.C5MED4"/>
<dbReference type="EnsemblFungi" id="CTRG_04427-t43_1">
    <property type="protein sequence ID" value="CTRG_04427-t43_1-p1"/>
    <property type="gene ID" value="CTRG_04427"/>
</dbReference>
<dbReference type="GeneID" id="8298660"/>
<dbReference type="KEGG" id="ctp:CTRG_04427"/>
<dbReference type="VEuPathDB" id="FungiDB:CTRG_04427"/>
<dbReference type="eggNOG" id="ENOG502QV1E">
    <property type="taxonomic scope" value="Eukaryota"/>
</dbReference>
<dbReference type="HOGENOM" id="CLU_019189_0_1_1"/>
<dbReference type="OrthoDB" id="2968323at2759"/>
<dbReference type="Proteomes" id="UP000002037">
    <property type="component" value="Unassembled WGS sequence"/>
</dbReference>
<dbReference type="GO" id="GO:0005739">
    <property type="term" value="C:mitochondrion"/>
    <property type="evidence" value="ECO:0007669"/>
    <property type="project" value="UniProtKB-SubCell"/>
</dbReference>
<dbReference type="Gene3D" id="3.30.200.20">
    <property type="entry name" value="Phosphorylase Kinase, domain 1"/>
    <property type="match status" value="1"/>
</dbReference>
<dbReference type="InterPro" id="IPR011009">
    <property type="entry name" value="Kinase-like_dom_sf"/>
</dbReference>
<dbReference type="InterPro" id="IPR051035">
    <property type="entry name" value="Mito_inheritance_9"/>
</dbReference>
<dbReference type="PANTHER" id="PTHR36091">
    <property type="entry name" value="ALTERED INHERITANCE OF MITOCHONDRIA PROTEIN 9, MITOCHONDRIAL"/>
    <property type="match status" value="1"/>
</dbReference>
<dbReference type="PANTHER" id="PTHR36091:SF1">
    <property type="entry name" value="ALTERED INHERITANCE OF MITOCHONDRIA PROTEIN 9, MITOCHONDRIAL"/>
    <property type="match status" value="1"/>
</dbReference>
<dbReference type="SUPFAM" id="SSF56112">
    <property type="entry name" value="Protein kinase-like (PK-like)"/>
    <property type="match status" value="1"/>
</dbReference>
<comment type="subcellular location">
    <subcellularLocation>
        <location evidence="1">Mitochondrion</location>
    </subcellularLocation>
</comment>
<comment type="similarity">
    <text evidence="3">Belongs to the AIM9 family.</text>
</comment>
<organism>
    <name type="scientific">Candida tropicalis (strain ATCC MYA-3404 / T1)</name>
    <name type="common">Yeast</name>
    <dbReference type="NCBI Taxonomy" id="294747"/>
    <lineage>
        <taxon>Eukaryota</taxon>
        <taxon>Fungi</taxon>
        <taxon>Dikarya</taxon>
        <taxon>Ascomycota</taxon>
        <taxon>Saccharomycotina</taxon>
        <taxon>Pichiomycetes</taxon>
        <taxon>Debaryomycetaceae</taxon>
        <taxon>Candida/Lodderomyces clade</taxon>
        <taxon>Candida</taxon>
    </lineage>
</organism>
<reference key="1">
    <citation type="journal article" date="2009" name="Nature">
        <title>Evolution of pathogenicity and sexual reproduction in eight Candida genomes.</title>
        <authorList>
            <person name="Butler G."/>
            <person name="Rasmussen M.D."/>
            <person name="Lin M.F."/>
            <person name="Santos M.A.S."/>
            <person name="Sakthikumar S."/>
            <person name="Munro C.A."/>
            <person name="Rheinbay E."/>
            <person name="Grabherr M."/>
            <person name="Forche A."/>
            <person name="Reedy J.L."/>
            <person name="Agrafioti I."/>
            <person name="Arnaud M.B."/>
            <person name="Bates S."/>
            <person name="Brown A.J.P."/>
            <person name="Brunke S."/>
            <person name="Costanzo M.C."/>
            <person name="Fitzpatrick D.A."/>
            <person name="de Groot P.W.J."/>
            <person name="Harris D."/>
            <person name="Hoyer L.L."/>
            <person name="Hube B."/>
            <person name="Klis F.M."/>
            <person name="Kodira C."/>
            <person name="Lennard N."/>
            <person name="Logue M.E."/>
            <person name="Martin R."/>
            <person name="Neiman A.M."/>
            <person name="Nikolaou E."/>
            <person name="Quail M.A."/>
            <person name="Quinn J."/>
            <person name="Santos M.C."/>
            <person name="Schmitzberger F.F."/>
            <person name="Sherlock G."/>
            <person name="Shah P."/>
            <person name="Silverstein K.A.T."/>
            <person name="Skrzypek M.S."/>
            <person name="Soll D."/>
            <person name="Staggs R."/>
            <person name="Stansfield I."/>
            <person name="Stumpf M.P.H."/>
            <person name="Sudbery P.E."/>
            <person name="Srikantha T."/>
            <person name="Zeng Q."/>
            <person name="Berman J."/>
            <person name="Berriman M."/>
            <person name="Heitman J."/>
            <person name="Gow N.A.R."/>
            <person name="Lorenz M.C."/>
            <person name="Birren B.W."/>
            <person name="Kellis M."/>
            <person name="Cuomo C.A."/>
        </authorList>
    </citation>
    <scope>NUCLEOTIDE SEQUENCE [LARGE SCALE GENOMIC DNA]</scope>
    <source>
        <strain>ATCC MYA-3404 / T1</strain>
    </source>
</reference>
<accession>C5MED4</accession>
<sequence length="620" mass="71175">MLSRVARNSSLLKQLPKLRQTTVLPVVLKNSIRFHATSSENKEIFTKLTDSKDPQRNQFFQYTWGSWLKNDKLNKKKRETVFSIEGLTLFLDTIKGFETTLSQPKHLHGSFVLGQNKDLLGEAEDKIILRSIASIHEGKHHRIYKLTLNTGRDLVLRIPYKLDSDAAIAAKIKSEVATLDFLNLKLGLKVPRVLSYGSDVYNEVGSPYILEEFIPGDLLMRKWHPLSPDSEETNKALHEVIDPIAEFQDKLLSVTFNKFGSLYFHDDVEGSLQNDLPYDGETNEDLKNRWRIGPSVERQFSKNKEKLPQNLIDELNGPWDASNPIALMESVADIELENAKNKLALINADAGANENDKDLINKQIKTFEHLKKITPLLINTKSKSIMNVEELFKPRLYIPDLDPLNVIQQGKDVNYFIDFEGSTIKPFILTGYPKFVAYEGAKIYNLEEDIPGYNELDELEKEQYAFMYYKTRNERMWEFELNKHRHDLIAVASPHIKVIKSPYLQALDLKTDNDHLYVEGSIVQLQALWEAYVANELVNSKDSKFPIEYTAEYLDQHQQDLSDHQLETVSSPFSATGGWIPQDMFNTLKDQGIIVETEDGNYKIETEKVLENPPKPEEKN</sequence>
<keyword id="KW-0496">Mitochondrion</keyword>
<keyword id="KW-1185">Reference proteome</keyword>
<keyword id="KW-0809">Transit peptide</keyword>
<name>AIM9_CANTT</name>
<gene>
    <name type="primary">AIM9</name>
    <name type="synonym">FMP29</name>
    <name type="ORF">CTRG_04427</name>
</gene>